<name>RT14_MARPO</name>
<protein>
    <recommendedName>
        <fullName evidence="1">Small ribosomal subunit protein uS14m</fullName>
    </recommendedName>
    <alternativeName>
        <fullName>Ribosomal protein S14, mitochondrial</fullName>
    </alternativeName>
</protein>
<dbReference type="EMBL" id="M68929">
    <property type="protein sequence ID" value="AAC09420.1"/>
    <property type="molecule type" value="Genomic_DNA"/>
</dbReference>
<dbReference type="PIR" id="S25947">
    <property type="entry name" value="S25947"/>
</dbReference>
<dbReference type="RefSeq" id="NP_054423.1">
    <property type="nucleotide sequence ID" value="NC_001660.1"/>
</dbReference>
<dbReference type="SMR" id="P26873"/>
<dbReference type="GeneID" id="2702472"/>
<dbReference type="GO" id="GO:0005739">
    <property type="term" value="C:mitochondrion"/>
    <property type="evidence" value="ECO:0007669"/>
    <property type="project" value="UniProtKB-SubCell"/>
</dbReference>
<dbReference type="GO" id="GO:1990904">
    <property type="term" value="C:ribonucleoprotein complex"/>
    <property type="evidence" value="ECO:0007669"/>
    <property type="project" value="UniProtKB-KW"/>
</dbReference>
<dbReference type="GO" id="GO:0005840">
    <property type="term" value="C:ribosome"/>
    <property type="evidence" value="ECO:0007669"/>
    <property type="project" value="UniProtKB-KW"/>
</dbReference>
<dbReference type="GO" id="GO:0003735">
    <property type="term" value="F:structural constituent of ribosome"/>
    <property type="evidence" value="ECO:0007669"/>
    <property type="project" value="InterPro"/>
</dbReference>
<dbReference type="GO" id="GO:0006412">
    <property type="term" value="P:translation"/>
    <property type="evidence" value="ECO:0007669"/>
    <property type="project" value="InterPro"/>
</dbReference>
<dbReference type="FunFam" id="1.10.287.1480:FF:000001">
    <property type="entry name" value="30S ribosomal protein S14"/>
    <property type="match status" value="1"/>
</dbReference>
<dbReference type="FunFam" id="4.10.830.10:FF:000004">
    <property type="entry name" value="Succinate dehydrogenase [ubiquinone] iron-sulfur subunit, mitochondrial"/>
    <property type="match status" value="1"/>
</dbReference>
<dbReference type="Gene3D" id="1.10.287.1480">
    <property type="match status" value="1"/>
</dbReference>
<dbReference type="InterPro" id="IPR001209">
    <property type="entry name" value="Ribosomal_uS14"/>
</dbReference>
<dbReference type="InterPro" id="IPR018271">
    <property type="entry name" value="Ribosomal_uS14_CS"/>
</dbReference>
<dbReference type="NCBIfam" id="NF006477">
    <property type="entry name" value="PRK08881.1"/>
    <property type="match status" value="1"/>
</dbReference>
<dbReference type="PANTHER" id="PTHR19836">
    <property type="entry name" value="30S RIBOSOMAL PROTEIN S14"/>
    <property type="match status" value="1"/>
</dbReference>
<dbReference type="PANTHER" id="PTHR19836:SF30">
    <property type="entry name" value="RIBOSOMAL PROTEIN S14"/>
    <property type="match status" value="1"/>
</dbReference>
<dbReference type="Pfam" id="PF00253">
    <property type="entry name" value="Ribosomal_S14"/>
    <property type="match status" value="1"/>
</dbReference>
<dbReference type="SUPFAM" id="SSF57716">
    <property type="entry name" value="Glucocorticoid receptor-like (DNA-binding domain)"/>
    <property type="match status" value="1"/>
</dbReference>
<dbReference type="PROSITE" id="PS00527">
    <property type="entry name" value="RIBOSOMAL_S14"/>
    <property type="match status" value="1"/>
</dbReference>
<gene>
    <name type="primary">RPS14</name>
</gene>
<feature type="chain" id="PRO_0000131005" description="Small ribosomal subunit protein uS14m">
    <location>
        <begin position="1"/>
        <end position="99"/>
    </location>
</feature>
<reference key="1">
    <citation type="journal article" date="1992" name="J. Mol. Biol.">
        <title>Gene organization deduced from the complete sequence of liverwort Marchantia polymorpha mitochondrial DNA. A primitive form of plant mitochondrial genome.</title>
        <authorList>
            <person name="Oda K."/>
            <person name="Yamato K."/>
            <person name="Ohta E."/>
            <person name="Nakamura Y."/>
            <person name="Takemura M."/>
            <person name="Nozato N."/>
            <person name="Akashi K."/>
            <person name="Kanegae T."/>
            <person name="Ogura Y."/>
            <person name="Kohchi T."/>
            <person name="Ohyama K."/>
        </authorList>
    </citation>
    <scope>NUCLEOTIDE SEQUENCE [GENOMIC DNA]</scope>
</reference>
<reference key="2">
    <citation type="journal article" date="1992" name="Nucleic Acids Res.">
        <title>Gene clusters for ribosomal proteins in the mitochondrial genome of a liverwort, Marchantia polymorpha.</title>
        <authorList>
            <person name="Takemura M."/>
            <person name="Oda K."/>
            <person name="Yamato K."/>
            <person name="Ohta E."/>
            <person name="Nakamura Y."/>
            <person name="Nozato N."/>
            <person name="Akashi K."/>
            <person name="Ohyama K."/>
        </authorList>
    </citation>
    <scope>NUCLEOTIDE SEQUENCE [GENOMIC DNA]</scope>
</reference>
<comment type="subcellular location">
    <subcellularLocation>
        <location>Mitochondrion</location>
    </subcellularLocation>
</comment>
<comment type="similarity">
    <text evidence="1">Belongs to the universal ribosomal protein uS14 family.</text>
</comment>
<organism>
    <name type="scientific">Marchantia polymorpha</name>
    <name type="common">Common liverwort</name>
    <name type="synonym">Marchantia aquatica</name>
    <dbReference type="NCBI Taxonomy" id="3197"/>
    <lineage>
        <taxon>Eukaryota</taxon>
        <taxon>Viridiplantae</taxon>
        <taxon>Streptophyta</taxon>
        <taxon>Embryophyta</taxon>
        <taxon>Marchantiophyta</taxon>
        <taxon>Marchantiopsida</taxon>
        <taxon>Marchantiidae</taxon>
        <taxon>Marchantiales</taxon>
        <taxon>Marchantiaceae</taxon>
        <taxon>Marchantia</taxon>
    </lineage>
</organism>
<proteinExistence type="inferred from homology"/>
<accession>P26873</accession>
<sequence length="99" mass="12008">MSNQIIRDHKRRLLVAKYELKRMHYKAICQDRNLPNKIRYEYFFKLSKLPRNSSKTRVRNRCIFTGRPRSVYKLFRISRIVFRELASKGSLIGINKSCW</sequence>
<evidence type="ECO:0000305" key="1"/>
<geneLocation type="mitochondrion"/>
<keyword id="KW-0496">Mitochondrion</keyword>
<keyword id="KW-0687">Ribonucleoprotein</keyword>
<keyword id="KW-0689">Ribosomal protein</keyword>